<name>MURE_STAES</name>
<dbReference type="EC" id="6.3.2.7" evidence="1"/>
<dbReference type="EMBL" id="AE015929">
    <property type="protein sequence ID" value="AAO04315.1"/>
    <property type="molecule type" value="Genomic_DNA"/>
</dbReference>
<dbReference type="RefSeq" id="NP_764273.1">
    <property type="nucleotide sequence ID" value="NC_004461.1"/>
</dbReference>
<dbReference type="RefSeq" id="WP_001829323.1">
    <property type="nucleotide sequence ID" value="NZ_WBME01000019.1"/>
</dbReference>
<dbReference type="SMR" id="Q8CPR2"/>
<dbReference type="KEGG" id="sep:SE_0718"/>
<dbReference type="PATRIC" id="fig|176280.10.peg.692"/>
<dbReference type="eggNOG" id="COG0769">
    <property type="taxonomic scope" value="Bacteria"/>
</dbReference>
<dbReference type="HOGENOM" id="CLU_022291_0_1_9"/>
<dbReference type="OrthoDB" id="9800958at2"/>
<dbReference type="UniPathway" id="UPA00219"/>
<dbReference type="Proteomes" id="UP000001411">
    <property type="component" value="Chromosome"/>
</dbReference>
<dbReference type="GO" id="GO:0005737">
    <property type="term" value="C:cytoplasm"/>
    <property type="evidence" value="ECO:0007669"/>
    <property type="project" value="UniProtKB-SubCell"/>
</dbReference>
<dbReference type="GO" id="GO:0005524">
    <property type="term" value="F:ATP binding"/>
    <property type="evidence" value="ECO:0007669"/>
    <property type="project" value="UniProtKB-UniRule"/>
</dbReference>
<dbReference type="GO" id="GO:0000287">
    <property type="term" value="F:magnesium ion binding"/>
    <property type="evidence" value="ECO:0007669"/>
    <property type="project" value="UniProtKB-UniRule"/>
</dbReference>
<dbReference type="GO" id="GO:0047482">
    <property type="term" value="F:UDP-N-acetylmuramoyl-L-alanyl-D-glutamate-L-lysine ligase activity"/>
    <property type="evidence" value="ECO:0007669"/>
    <property type="project" value="UniProtKB-UniRule"/>
</dbReference>
<dbReference type="GO" id="GO:0051301">
    <property type="term" value="P:cell division"/>
    <property type="evidence" value="ECO:0007669"/>
    <property type="project" value="UniProtKB-KW"/>
</dbReference>
<dbReference type="GO" id="GO:0071555">
    <property type="term" value="P:cell wall organization"/>
    <property type="evidence" value="ECO:0007669"/>
    <property type="project" value="UniProtKB-KW"/>
</dbReference>
<dbReference type="GO" id="GO:0009252">
    <property type="term" value="P:peptidoglycan biosynthetic process"/>
    <property type="evidence" value="ECO:0007669"/>
    <property type="project" value="UniProtKB-UniRule"/>
</dbReference>
<dbReference type="GO" id="GO:0008360">
    <property type="term" value="P:regulation of cell shape"/>
    <property type="evidence" value="ECO:0007669"/>
    <property type="project" value="UniProtKB-KW"/>
</dbReference>
<dbReference type="Gene3D" id="3.90.190.20">
    <property type="entry name" value="Mur ligase, C-terminal domain"/>
    <property type="match status" value="1"/>
</dbReference>
<dbReference type="Gene3D" id="3.40.1190.10">
    <property type="entry name" value="Mur-like, catalytic domain"/>
    <property type="match status" value="1"/>
</dbReference>
<dbReference type="Gene3D" id="3.40.1390.10">
    <property type="entry name" value="MurE/MurF, N-terminal domain"/>
    <property type="match status" value="1"/>
</dbReference>
<dbReference type="HAMAP" id="MF_00208">
    <property type="entry name" value="MurE"/>
    <property type="match status" value="1"/>
</dbReference>
<dbReference type="InterPro" id="IPR036565">
    <property type="entry name" value="Mur-like_cat_sf"/>
</dbReference>
<dbReference type="InterPro" id="IPR004101">
    <property type="entry name" value="Mur_ligase_C"/>
</dbReference>
<dbReference type="InterPro" id="IPR036615">
    <property type="entry name" value="Mur_ligase_C_dom_sf"/>
</dbReference>
<dbReference type="InterPro" id="IPR013221">
    <property type="entry name" value="Mur_ligase_cen"/>
</dbReference>
<dbReference type="InterPro" id="IPR000713">
    <property type="entry name" value="Mur_ligase_N"/>
</dbReference>
<dbReference type="InterPro" id="IPR035911">
    <property type="entry name" value="MurE/MurF_N"/>
</dbReference>
<dbReference type="InterPro" id="IPR005761">
    <property type="entry name" value="UDP-N-AcMur-Glu-dNH2Pim_ligase"/>
</dbReference>
<dbReference type="NCBIfam" id="TIGR01085">
    <property type="entry name" value="murE"/>
    <property type="match status" value="1"/>
</dbReference>
<dbReference type="NCBIfam" id="NF001126">
    <property type="entry name" value="PRK00139.1-4"/>
    <property type="match status" value="1"/>
</dbReference>
<dbReference type="NCBIfam" id="NF010628">
    <property type="entry name" value="PRK14022.1"/>
    <property type="match status" value="1"/>
</dbReference>
<dbReference type="PANTHER" id="PTHR23135">
    <property type="entry name" value="MUR LIGASE FAMILY MEMBER"/>
    <property type="match status" value="1"/>
</dbReference>
<dbReference type="PANTHER" id="PTHR23135:SF4">
    <property type="entry name" value="UDP-N-ACETYLMURAMOYL-L-ALANYL-D-GLUTAMATE--2,6-DIAMINOPIMELATE LIGASE MURE HOMOLOG, CHLOROPLASTIC"/>
    <property type="match status" value="1"/>
</dbReference>
<dbReference type="Pfam" id="PF01225">
    <property type="entry name" value="Mur_ligase"/>
    <property type="match status" value="1"/>
</dbReference>
<dbReference type="Pfam" id="PF02875">
    <property type="entry name" value="Mur_ligase_C"/>
    <property type="match status" value="1"/>
</dbReference>
<dbReference type="Pfam" id="PF08245">
    <property type="entry name" value="Mur_ligase_M"/>
    <property type="match status" value="1"/>
</dbReference>
<dbReference type="SUPFAM" id="SSF53623">
    <property type="entry name" value="MurD-like peptide ligases, catalytic domain"/>
    <property type="match status" value="1"/>
</dbReference>
<dbReference type="SUPFAM" id="SSF53244">
    <property type="entry name" value="MurD-like peptide ligases, peptide-binding domain"/>
    <property type="match status" value="1"/>
</dbReference>
<dbReference type="SUPFAM" id="SSF63418">
    <property type="entry name" value="MurE/MurF N-terminal domain"/>
    <property type="match status" value="1"/>
</dbReference>
<sequence length="494" mass="54277">MNASALFKKIRVKNVIGTLDIQVDDITTDSRTAKEGSLFVASKGYTVDSHKFCQNVVDQGCGIVVVNRELELKGNVTQVVVPDTLRVASLLAHELYEFPSHQLTTYGVTGTNGKTSIATMIHLIYRKLNKNSAYLGTNGFQVNETKTKGANTTPETVALTKKIKEAVDANAEAMTMEVSSHGLALGRLRGVEFDVAIFSNLTQDHLDFHGTMEAYGHAKSLLFSQLGEDLSKEKYVVLNNDDDFSDYLASVTPYEVFTYGITHEAQFMAKNIKESLQGVEFEFCTPFGSFPVKSPYVGRFNISNIMAAMIAVWSKGTNLNEIINAVTELEPVEGRLEVLDPSLPIDLIIDYAHTADGMNKLIDAVQPFVKQKLIFLVGMAGERDLTKTPEMGRVACRADYVIFTPDNPANDDPKMLTAELAKGATHNNYIEFDDRAEGIRHAIDIAEPGDTVVLASKGREPYQIMPGHVKVPHRDDLIGLKAAYQKFGGGPLED</sequence>
<proteinExistence type="inferred from homology"/>
<protein>
    <recommendedName>
        <fullName evidence="1">UDP-N-acetylmuramoyl-L-alanyl-D-glutamate--L-lysine ligase</fullName>
        <ecNumber evidence="1">6.3.2.7</ecNumber>
    </recommendedName>
    <alternativeName>
        <fullName evidence="1">L-lysine-adding enzyme</fullName>
    </alternativeName>
    <alternativeName>
        <fullName evidence="1">UDP-MurNAc-L-Ala-D-Glu:L-Lys ligase</fullName>
    </alternativeName>
    <alternativeName>
        <fullName evidence="1">UDP-MurNAc-tripeptide synthetase</fullName>
    </alternativeName>
    <alternativeName>
        <fullName evidence="1">UDP-N-acetylmuramyl-tripeptide synthetase</fullName>
    </alternativeName>
</protein>
<comment type="function">
    <text evidence="1">Catalyzes the addition of L-lysine to the nucleotide precursor UDP-N-acetylmuramoyl-L-alanyl-D-glutamate (UMAG) in the biosynthesis of bacterial cell-wall peptidoglycan.</text>
</comment>
<comment type="catalytic activity">
    <reaction evidence="1">
        <text>UDP-N-acetyl-alpha-D-muramoyl-L-alanyl-D-glutamate + L-lysine + ATP = UDP-N-acetyl-alpha-D-muramoyl-L-alanyl-gamma-D-glutamyl-L-lysine + ADP + phosphate + H(+)</text>
        <dbReference type="Rhea" id="RHEA:17969"/>
        <dbReference type="ChEBI" id="CHEBI:15378"/>
        <dbReference type="ChEBI" id="CHEBI:30616"/>
        <dbReference type="ChEBI" id="CHEBI:32551"/>
        <dbReference type="ChEBI" id="CHEBI:43474"/>
        <dbReference type="ChEBI" id="CHEBI:83900"/>
        <dbReference type="ChEBI" id="CHEBI:83903"/>
        <dbReference type="ChEBI" id="CHEBI:456216"/>
        <dbReference type="EC" id="6.3.2.7"/>
    </reaction>
</comment>
<comment type="pathway">
    <text evidence="1">Cell wall biogenesis; peptidoglycan biosynthesis.</text>
</comment>
<comment type="subcellular location">
    <subcellularLocation>
        <location evidence="1">Cytoplasm</location>
    </subcellularLocation>
</comment>
<comment type="PTM">
    <text evidence="1">Carboxylation is probably crucial for Mg(2+) binding and, consequently, for the gamma-phosphate positioning of ATP.</text>
</comment>
<comment type="similarity">
    <text evidence="1">Belongs to the MurCDEF family. MurE subfamily.</text>
</comment>
<reference key="1">
    <citation type="journal article" date="2003" name="Mol. Microbiol.">
        <title>Genome-based analysis of virulence genes in a non-biofilm-forming Staphylococcus epidermidis strain (ATCC 12228).</title>
        <authorList>
            <person name="Zhang Y.-Q."/>
            <person name="Ren S.-X."/>
            <person name="Li H.-L."/>
            <person name="Wang Y.-X."/>
            <person name="Fu G."/>
            <person name="Yang J."/>
            <person name="Qin Z.-Q."/>
            <person name="Miao Y.-G."/>
            <person name="Wang W.-Y."/>
            <person name="Chen R.-S."/>
            <person name="Shen Y."/>
            <person name="Chen Z."/>
            <person name="Yuan Z.-H."/>
            <person name="Zhao G.-P."/>
            <person name="Qu D."/>
            <person name="Danchin A."/>
            <person name="Wen Y.-M."/>
        </authorList>
    </citation>
    <scope>NUCLEOTIDE SEQUENCE [LARGE SCALE GENOMIC DNA]</scope>
    <source>
        <strain>ATCC 12228 / FDA PCI 1200</strain>
    </source>
</reference>
<organism>
    <name type="scientific">Staphylococcus epidermidis (strain ATCC 12228 / FDA PCI 1200)</name>
    <dbReference type="NCBI Taxonomy" id="176280"/>
    <lineage>
        <taxon>Bacteria</taxon>
        <taxon>Bacillati</taxon>
        <taxon>Bacillota</taxon>
        <taxon>Bacilli</taxon>
        <taxon>Bacillales</taxon>
        <taxon>Staphylococcaceae</taxon>
        <taxon>Staphylococcus</taxon>
    </lineage>
</organism>
<keyword id="KW-0067">ATP-binding</keyword>
<keyword id="KW-0131">Cell cycle</keyword>
<keyword id="KW-0132">Cell division</keyword>
<keyword id="KW-0133">Cell shape</keyword>
<keyword id="KW-0961">Cell wall biogenesis/degradation</keyword>
<keyword id="KW-0963">Cytoplasm</keyword>
<keyword id="KW-0436">Ligase</keyword>
<keyword id="KW-0547">Nucleotide-binding</keyword>
<keyword id="KW-0573">Peptidoglycan synthesis</keyword>
<feature type="chain" id="PRO_0000101946" description="UDP-N-acetylmuramoyl-L-alanyl-D-glutamate--L-lysine ligase">
    <location>
        <begin position="1"/>
        <end position="494"/>
    </location>
</feature>
<feature type="short sequence motif" description="L-lysine recognition motif">
    <location>
        <begin position="406"/>
        <end position="409"/>
    </location>
</feature>
<feature type="binding site" evidence="1">
    <location>
        <position position="30"/>
    </location>
    <ligand>
        <name>UDP-N-acetyl-alpha-D-muramoyl-L-alanyl-D-glutamate</name>
        <dbReference type="ChEBI" id="CHEBI:83900"/>
    </ligand>
</feature>
<feature type="binding site" evidence="1">
    <location>
        <begin position="110"/>
        <end position="116"/>
    </location>
    <ligand>
        <name>ATP</name>
        <dbReference type="ChEBI" id="CHEBI:30616"/>
    </ligand>
</feature>
<feature type="binding site" evidence="1">
    <location>
        <begin position="152"/>
        <end position="153"/>
    </location>
    <ligand>
        <name>UDP-N-acetyl-alpha-D-muramoyl-L-alanyl-D-glutamate</name>
        <dbReference type="ChEBI" id="CHEBI:83900"/>
    </ligand>
</feature>
<feature type="binding site" evidence="1">
    <location>
        <position position="179"/>
    </location>
    <ligand>
        <name>UDP-N-acetyl-alpha-D-muramoyl-L-alanyl-D-glutamate</name>
        <dbReference type="ChEBI" id="CHEBI:83900"/>
    </ligand>
</feature>
<feature type="binding site" evidence="1">
    <location>
        <position position="187"/>
    </location>
    <ligand>
        <name>UDP-N-acetyl-alpha-D-muramoyl-L-alanyl-D-glutamate</name>
        <dbReference type="ChEBI" id="CHEBI:83900"/>
    </ligand>
</feature>
<feature type="modified residue" description="N6-carboxylysine" evidence="1">
    <location>
        <position position="219"/>
    </location>
</feature>
<gene>
    <name evidence="1" type="primary">murE</name>
    <name type="ordered locus">SE_0718</name>
</gene>
<accession>Q8CPR2</accession>
<evidence type="ECO:0000255" key="1">
    <source>
        <dbReference type="HAMAP-Rule" id="MF_00208"/>
    </source>
</evidence>